<accession>Q9HJ35</accession>
<comment type="function">
    <text evidence="1">Converts GTP to 7,8-dihydro-D-neopterin 2',3'-cyclic phosphate, the first intermediate in the biosynthesis of coenzyme methanopterin.</text>
</comment>
<comment type="catalytic activity">
    <reaction evidence="1">
        <text>GTP + H2O = 7,8-dihydroneopterin 2',3'-cyclic phosphate + formate + diphosphate + H(+)</text>
        <dbReference type="Rhea" id="RHEA:25860"/>
        <dbReference type="ChEBI" id="CHEBI:15377"/>
        <dbReference type="ChEBI" id="CHEBI:15378"/>
        <dbReference type="ChEBI" id="CHEBI:15740"/>
        <dbReference type="ChEBI" id="CHEBI:33019"/>
        <dbReference type="ChEBI" id="CHEBI:37565"/>
        <dbReference type="ChEBI" id="CHEBI:58854"/>
        <dbReference type="EC" id="3.5.4.39"/>
    </reaction>
</comment>
<comment type="cofactor">
    <cofactor evidence="1">
        <name>Fe(2+)</name>
        <dbReference type="ChEBI" id="CHEBI:29033"/>
    </cofactor>
    <text evidence="1">Binds 1 Fe(2+) ion per subunit.</text>
</comment>
<comment type="pathway">
    <text evidence="1">Cofactor biosynthesis; 5,6,7,8-tetrahydromethanopterin biosynthesis.</text>
</comment>
<comment type="subunit">
    <text evidence="1">Homodimer.</text>
</comment>
<comment type="similarity">
    <text evidence="1">Belongs to the GTP cyclohydrolase IV family.</text>
</comment>
<protein>
    <recommendedName>
        <fullName evidence="1">GTP cyclohydrolase MptA</fullName>
        <ecNumber evidence="1">3.5.4.39</ecNumber>
    </recommendedName>
    <alternativeName>
        <fullName evidence="1">GTP cyclohydrolase IV</fullName>
    </alternativeName>
</protein>
<organism>
    <name type="scientific">Thermoplasma acidophilum (strain ATCC 25905 / DSM 1728 / JCM 9062 / NBRC 15155 / AMRC-C165)</name>
    <dbReference type="NCBI Taxonomy" id="273075"/>
    <lineage>
        <taxon>Archaea</taxon>
        <taxon>Methanobacteriati</taxon>
        <taxon>Thermoplasmatota</taxon>
        <taxon>Thermoplasmata</taxon>
        <taxon>Thermoplasmatales</taxon>
        <taxon>Thermoplasmataceae</taxon>
        <taxon>Thermoplasma</taxon>
    </lineage>
</organism>
<reference key="1">
    <citation type="journal article" date="2000" name="Nature">
        <title>The genome sequence of the thermoacidophilic scavenger Thermoplasma acidophilum.</title>
        <authorList>
            <person name="Ruepp A."/>
            <person name="Graml W."/>
            <person name="Santos-Martinez M.-L."/>
            <person name="Koretke K.K."/>
            <person name="Volker C."/>
            <person name="Mewes H.-W."/>
            <person name="Frishman D."/>
            <person name="Stocker S."/>
            <person name="Lupas A.N."/>
            <person name="Baumeister W."/>
        </authorList>
    </citation>
    <scope>NUCLEOTIDE SEQUENCE [LARGE SCALE GENOMIC DNA]</scope>
    <source>
        <strain>ATCC 25905 / DSM 1728 / JCM 9062 / NBRC 15155 / AMRC-C165</strain>
    </source>
</reference>
<name>MPTA_THEAC</name>
<proteinExistence type="inferred from homology"/>
<dbReference type="EC" id="3.5.4.39" evidence="1"/>
<dbReference type="EMBL" id="AL445066">
    <property type="protein sequence ID" value="CAC12264.1"/>
    <property type="molecule type" value="Genomic_DNA"/>
</dbReference>
<dbReference type="RefSeq" id="WP_010901546.1">
    <property type="nucleotide sequence ID" value="NC_002578.1"/>
</dbReference>
<dbReference type="SMR" id="Q9HJ35"/>
<dbReference type="STRING" id="273075.gene:9572360"/>
<dbReference type="PaxDb" id="273075-Ta1138"/>
<dbReference type="DNASU" id="1456642"/>
<dbReference type="EnsemblBacteria" id="CAC12264">
    <property type="protein sequence ID" value="CAC12264"/>
    <property type="gene ID" value="CAC12264"/>
</dbReference>
<dbReference type="KEGG" id="tac:Ta1138"/>
<dbReference type="eggNOG" id="arCOG04301">
    <property type="taxonomic scope" value="Archaea"/>
</dbReference>
<dbReference type="HOGENOM" id="CLU_062816_1_0_2"/>
<dbReference type="InParanoid" id="Q9HJ35"/>
<dbReference type="OrthoDB" id="53087at2157"/>
<dbReference type="UniPathway" id="UPA00065"/>
<dbReference type="Proteomes" id="UP000001024">
    <property type="component" value="Chromosome"/>
</dbReference>
<dbReference type="GO" id="GO:0003934">
    <property type="term" value="F:GTP cyclohydrolase I activity"/>
    <property type="evidence" value="ECO:0007669"/>
    <property type="project" value="InterPro"/>
</dbReference>
<dbReference type="GO" id="GO:0044682">
    <property type="term" value="F:GTP cyclohydrolase IV activity"/>
    <property type="evidence" value="ECO:0007669"/>
    <property type="project" value="UniProtKB-UniRule"/>
</dbReference>
<dbReference type="GO" id="GO:0005506">
    <property type="term" value="F:iron ion binding"/>
    <property type="evidence" value="ECO:0007669"/>
    <property type="project" value="UniProtKB-UniRule"/>
</dbReference>
<dbReference type="GO" id="GO:2001118">
    <property type="term" value="P:tetrahydromethanopterin biosynthetic process"/>
    <property type="evidence" value="ECO:0007669"/>
    <property type="project" value="UniProtKB-UniRule"/>
</dbReference>
<dbReference type="Gene3D" id="3.10.270.10">
    <property type="entry name" value="Urate Oxidase"/>
    <property type="match status" value="1"/>
</dbReference>
<dbReference type="HAMAP" id="MF_01527_A">
    <property type="entry name" value="GTP_cyclohydrol_A"/>
    <property type="match status" value="1"/>
</dbReference>
<dbReference type="InterPro" id="IPR003801">
    <property type="entry name" value="GTP_cyclohydrolase_FolE2/MptA"/>
</dbReference>
<dbReference type="InterPro" id="IPR022840">
    <property type="entry name" value="GTP_cyclohydrolase_MptA"/>
</dbReference>
<dbReference type="NCBIfam" id="TIGR00294">
    <property type="entry name" value="GTP cyclohydrolase MptA"/>
    <property type="match status" value="1"/>
</dbReference>
<dbReference type="PANTHER" id="PTHR36445">
    <property type="entry name" value="GTP CYCLOHYDROLASE MPTA"/>
    <property type="match status" value="1"/>
</dbReference>
<dbReference type="PANTHER" id="PTHR36445:SF1">
    <property type="entry name" value="GTP CYCLOHYDROLASE MPTA"/>
    <property type="match status" value="1"/>
</dbReference>
<dbReference type="Pfam" id="PF02649">
    <property type="entry name" value="GCHY-1"/>
    <property type="match status" value="1"/>
</dbReference>
<sequence>MIDFLDVQKETPRIRIAIDRVGVKNIKFPLKIHDDFAFLTLNLFVDVPADRKGADMSRAVESIQKVINAGSYGERIGDIGIAICDEALSRFNYSEKAQCEVNIQYYRRSGERYLEYRMYVETAKDRKQIMKNEIGISYVTMTACPCAMETTRALISMDNPDISDAISAIPTITHNQRNVTKLTVDNRSKMITVWDLADVMERVQGKPLDSLLKRVEEGRLVYSAHRNPKFVEDVVREIAYEAARVLGVPDEATIKVSSESDESIHPHNAYAEIDTTAGELRKLHLH</sequence>
<evidence type="ECO:0000255" key="1">
    <source>
        <dbReference type="HAMAP-Rule" id="MF_01527"/>
    </source>
</evidence>
<gene>
    <name evidence="1" type="primary">mptA</name>
    <name type="ordered locus">Ta1138</name>
</gene>
<feature type="chain" id="PRO_0000147753" description="GTP cyclohydrolase MptA">
    <location>
        <begin position="1"/>
        <end position="286"/>
    </location>
</feature>
<feature type="site" description="May be catalytically important" evidence="1">
    <location>
        <position position="144"/>
    </location>
</feature>
<keyword id="KW-0378">Hydrolase</keyword>
<keyword id="KW-0408">Iron</keyword>
<keyword id="KW-0479">Metal-binding</keyword>
<keyword id="KW-1185">Reference proteome</keyword>